<sequence>MTAQIIDGKAIAQSIRTQLREQVTARKEAGQRVPGLAVILVGADPASQVYVGSKRKACEEVGFISRSYDLDTSCSEAELLALIDQLNDDPSIDGILVQLPLPAHIEDSKVIERIRPDKDVDGFHPYNVGRLAQRIPVLRSCTPMGIMTLIKSTGVDTYGLDAVVVGASNIVGRPMTLELLLAGCTTTTCHRFTKNLEQKIRQADLVVVAVGKPGFIPGEWIKPGAIVIDVGINRLENGTLVGDVQYETAAQNASFITPVPGGVGPMTIASLLENTLYAAEQYHD</sequence>
<feature type="chain" id="PRO_0000268494" description="Bifunctional protein FolD">
    <location>
        <begin position="1"/>
        <end position="284"/>
    </location>
</feature>
<feature type="binding site" evidence="1">
    <location>
        <begin position="166"/>
        <end position="168"/>
    </location>
    <ligand>
        <name>NADP(+)</name>
        <dbReference type="ChEBI" id="CHEBI:58349"/>
    </ligand>
</feature>
<feature type="binding site" evidence="1">
    <location>
        <position position="232"/>
    </location>
    <ligand>
        <name>NADP(+)</name>
        <dbReference type="ChEBI" id="CHEBI:58349"/>
    </ligand>
</feature>
<name>FOLD_SHEON</name>
<comment type="function">
    <text evidence="1">Catalyzes the oxidation of 5,10-methylenetetrahydrofolate to 5,10-methenyltetrahydrofolate and then the hydrolysis of 5,10-methenyltetrahydrofolate to 10-formyltetrahydrofolate.</text>
</comment>
<comment type="catalytic activity">
    <reaction evidence="1">
        <text>(6R)-5,10-methylene-5,6,7,8-tetrahydrofolate + NADP(+) = (6R)-5,10-methenyltetrahydrofolate + NADPH</text>
        <dbReference type="Rhea" id="RHEA:22812"/>
        <dbReference type="ChEBI" id="CHEBI:15636"/>
        <dbReference type="ChEBI" id="CHEBI:57455"/>
        <dbReference type="ChEBI" id="CHEBI:57783"/>
        <dbReference type="ChEBI" id="CHEBI:58349"/>
        <dbReference type="EC" id="1.5.1.5"/>
    </reaction>
</comment>
<comment type="catalytic activity">
    <reaction evidence="1">
        <text>(6R)-5,10-methenyltetrahydrofolate + H2O = (6R)-10-formyltetrahydrofolate + H(+)</text>
        <dbReference type="Rhea" id="RHEA:23700"/>
        <dbReference type="ChEBI" id="CHEBI:15377"/>
        <dbReference type="ChEBI" id="CHEBI:15378"/>
        <dbReference type="ChEBI" id="CHEBI:57455"/>
        <dbReference type="ChEBI" id="CHEBI:195366"/>
        <dbReference type="EC" id="3.5.4.9"/>
    </reaction>
</comment>
<comment type="pathway">
    <text evidence="1">One-carbon metabolism; tetrahydrofolate interconversion.</text>
</comment>
<comment type="subunit">
    <text evidence="1">Homodimer.</text>
</comment>
<comment type="similarity">
    <text evidence="1">Belongs to the tetrahydrofolate dehydrogenase/cyclohydrolase family.</text>
</comment>
<organism>
    <name type="scientific">Shewanella oneidensis (strain ATCC 700550 / JCM 31522 / CIP 106686 / LMG 19005 / NCIMB 14063 / MR-1)</name>
    <dbReference type="NCBI Taxonomy" id="211586"/>
    <lineage>
        <taxon>Bacteria</taxon>
        <taxon>Pseudomonadati</taxon>
        <taxon>Pseudomonadota</taxon>
        <taxon>Gammaproteobacteria</taxon>
        <taxon>Alteromonadales</taxon>
        <taxon>Shewanellaceae</taxon>
        <taxon>Shewanella</taxon>
    </lineage>
</organism>
<gene>
    <name evidence="1" type="primary">folD</name>
    <name type="ordered locus">SO_1792</name>
</gene>
<protein>
    <recommendedName>
        <fullName evidence="1">Bifunctional protein FolD</fullName>
    </recommendedName>
    <domain>
        <recommendedName>
            <fullName evidence="1">Methylenetetrahydrofolate dehydrogenase</fullName>
            <ecNumber evidence="1">1.5.1.5</ecNumber>
        </recommendedName>
    </domain>
    <domain>
        <recommendedName>
            <fullName evidence="1">Methenyltetrahydrofolate cyclohydrolase</fullName>
            <ecNumber evidence="1">3.5.4.9</ecNumber>
        </recommendedName>
    </domain>
</protein>
<accession>Q8EG21</accession>
<evidence type="ECO:0000255" key="1">
    <source>
        <dbReference type="HAMAP-Rule" id="MF_01576"/>
    </source>
</evidence>
<proteinExistence type="inferred from homology"/>
<keyword id="KW-0028">Amino-acid biosynthesis</keyword>
<keyword id="KW-0368">Histidine biosynthesis</keyword>
<keyword id="KW-0378">Hydrolase</keyword>
<keyword id="KW-0486">Methionine biosynthesis</keyword>
<keyword id="KW-0511">Multifunctional enzyme</keyword>
<keyword id="KW-0521">NADP</keyword>
<keyword id="KW-0554">One-carbon metabolism</keyword>
<keyword id="KW-0560">Oxidoreductase</keyword>
<keyword id="KW-0658">Purine biosynthesis</keyword>
<keyword id="KW-1185">Reference proteome</keyword>
<reference key="1">
    <citation type="journal article" date="2002" name="Nat. Biotechnol.">
        <title>Genome sequence of the dissimilatory metal ion-reducing bacterium Shewanella oneidensis.</title>
        <authorList>
            <person name="Heidelberg J.F."/>
            <person name="Paulsen I.T."/>
            <person name="Nelson K.E."/>
            <person name="Gaidos E.J."/>
            <person name="Nelson W.C."/>
            <person name="Read T.D."/>
            <person name="Eisen J.A."/>
            <person name="Seshadri R."/>
            <person name="Ward N.L."/>
            <person name="Methe B.A."/>
            <person name="Clayton R.A."/>
            <person name="Meyer T."/>
            <person name="Tsapin A."/>
            <person name="Scott J."/>
            <person name="Beanan M.J."/>
            <person name="Brinkac L.M."/>
            <person name="Daugherty S.C."/>
            <person name="DeBoy R.T."/>
            <person name="Dodson R.J."/>
            <person name="Durkin A.S."/>
            <person name="Haft D.H."/>
            <person name="Kolonay J.F."/>
            <person name="Madupu R."/>
            <person name="Peterson J.D."/>
            <person name="Umayam L.A."/>
            <person name="White O."/>
            <person name="Wolf A.M."/>
            <person name="Vamathevan J.J."/>
            <person name="Weidman J.F."/>
            <person name="Impraim M."/>
            <person name="Lee K."/>
            <person name="Berry K.J."/>
            <person name="Lee C."/>
            <person name="Mueller J."/>
            <person name="Khouri H.M."/>
            <person name="Gill J."/>
            <person name="Utterback T.R."/>
            <person name="McDonald L.A."/>
            <person name="Feldblyum T.V."/>
            <person name="Smith H.O."/>
            <person name="Venter J.C."/>
            <person name="Nealson K.H."/>
            <person name="Fraser C.M."/>
        </authorList>
    </citation>
    <scope>NUCLEOTIDE SEQUENCE [LARGE SCALE GENOMIC DNA]</scope>
    <source>
        <strain>ATCC 700550 / JCM 31522 / CIP 106686 / LMG 19005 / NCIMB 14063 / MR-1</strain>
    </source>
</reference>
<dbReference type="EC" id="1.5.1.5" evidence="1"/>
<dbReference type="EC" id="3.5.4.9" evidence="1"/>
<dbReference type="EMBL" id="AE014299">
    <property type="protein sequence ID" value="AAN54845.1"/>
    <property type="molecule type" value="Genomic_DNA"/>
</dbReference>
<dbReference type="RefSeq" id="NP_717401.1">
    <property type="nucleotide sequence ID" value="NC_004347.2"/>
</dbReference>
<dbReference type="RefSeq" id="WP_011071914.1">
    <property type="nucleotide sequence ID" value="NC_004347.2"/>
</dbReference>
<dbReference type="SMR" id="Q8EG21"/>
<dbReference type="STRING" id="211586.SO_1792"/>
<dbReference type="PaxDb" id="211586-SO_1792"/>
<dbReference type="KEGG" id="son:SO_1792"/>
<dbReference type="PATRIC" id="fig|211586.12.peg.1722"/>
<dbReference type="eggNOG" id="COG0190">
    <property type="taxonomic scope" value="Bacteria"/>
</dbReference>
<dbReference type="HOGENOM" id="CLU_034045_2_1_6"/>
<dbReference type="OrthoDB" id="9803580at2"/>
<dbReference type="PhylomeDB" id="Q8EG21"/>
<dbReference type="BioCyc" id="SONE211586:G1GMP-1640-MONOMER"/>
<dbReference type="UniPathway" id="UPA00193"/>
<dbReference type="Proteomes" id="UP000008186">
    <property type="component" value="Chromosome"/>
</dbReference>
<dbReference type="GO" id="GO:0005829">
    <property type="term" value="C:cytosol"/>
    <property type="evidence" value="ECO:0000318"/>
    <property type="project" value="GO_Central"/>
</dbReference>
<dbReference type="GO" id="GO:0004477">
    <property type="term" value="F:methenyltetrahydrofolate cyclohydrolase activity"/>
    <property type="evidence" value="ECO:0000318"/>
    <property type="project" value="GO_Central"/>
</dbReference>
<dbReference type="GO" id="GO:0004488">
    <property type="term" value="F:methylenetetrahydrofolate dehydrogenase (NADP+) activity"/>
    <property type="evidence" value="ECO:0000318"/>
    <property type="project" value="GO_Central"/>
</dbReference>
<dbReference type="GO" id="GO:0000105">
    <property type="term" value="P:L-histidine biosynthetic process"/>
    <property type="evidence" value="ECO:0007669"/>
    <property type="project" value="UniProtKB-KW"/>
</dbReference>
<dbReference type="GO" id="GO:0009086">
    <property type="term" value="P:methionine biosynthetic process"/>
    <property type="evidence" value="ECO:0007669"/>
    <property type="project" value="UniProtKB-KW"/>
</dbReference>
<dbReference type="GO" id="GO:0006164">
    <property type="term" value="P:purine nucleotide biosynthetic process"/>
    <property type="evidence" value="ECO:0007669"/>
    <property type="project" value="UniProtKB-KW"/>
</dbReference>
<dbReference type="GO" id="GO:0035999">
    <property type="term" value="P:tetrahydrofolate interconversion"/>
    <property type="evidence" value="ECO:0000318"/>
    <property type="project" value="GO_Central"/>
</dbReference>
<dbReference type="CDD" id="cd01080">
    <property type="entry name" value="NAD_bind_m-THF_DH_Cyclohyd"/>
    <property type="match status" value="1"/>
</dbReference>
<dbReference type="FunFam" id="3.40.50.10860:FF:000001">
    <property type="entry name" value="Bifunctional protein FolD"/>
    <property type="match status" value="1"/>
</dbReference>
<dbReference type="FunFam" id="3.40.50.720:FF:000006">
    <property type="entry name" value="Bifunctional protein FolD"/>
    <property type="match status" value="1"/>
</dbReference>
<dbReference type="Gene3D" id="3.40.50.10860">
    <property type="entry name" value="Leucine Dehydrogenase, chain A, domain 1"/>
    <property type="match status" value="1"/>
</dbReference>
<dbReference type="Gene3D" id="3.40.50.720">
    <property type="entry name" value="NAD(P)-binding Rossmann-like Domain"/>
    <property type="match status" value="1"/>
</dbReference>
<dbReference type="HAMAP" id="MF_01576">
    <property type="entry name" value="THF_DHG_CYH"/>
    <property type="match status" value="1"/>
</dbReference>
<dbReference type="InterPro" id="IPR046346">
    <property type="entry name" value="Aminoacid_DH-like_N_sf"/>
</dbReference>
<dbReference type="InterPro" id="IPR036291">
    <property type="entry name" value="NAD(P)-bd_dom_sf"/>
</dbReference>
<dbReference type="InterPro" id="IPR000672">
    <property type="entry name" value="THF_DH/CycHdrlase"/>
</dbReference>
<dbReference type="InterPro" id="IPR020630">
    <property type="entry name" value="THF_DH/CycHdrlase_cat_dom"/>
</dbReference>
<dbReference type="InterPro" id="IPR020867">
    <property type="entry name" value="THF_DH/CycHdrlase_CS"/>
</dbReference>
<dbReference type="InterPro" id="IPR020631">
    <property type="entry name" value="THF_DH/CycHdrlase_NAD-bd_dom"/>
</dbReference>
<dbReference type="NCBIfam" id="NF008058">
    <property type="entry name" value="PRK10792.1"/>
    <property type="match status" value="1"/>
</dbReference>
<dbReference type="NCBIfam" id="NF010783">
    <property type="entry name" value="PRK14186.1"/>
    <property type="match status" value="1"/>
</dbReference>
<dbReference type="PANTHER" id="PTHR48099:SF5">
    <property type="entry name" value="C-1-TETRAHYDROFOLATE SYNTHASE, CYTOPLASMIC"/>
    <property type="match status" value="1"/>
</dbReference>
<dbReference type="PANTHER" id="PTHR48099">
    <property type="entry name" value="C-1-TETRAHYDROFOLATE SYNTHASE, CYTOPLASMIC-RELATED"/>
    <property type="match status" value="1"/>
</dbReference>
<dbReference type="Pfam" id="PF00763">
    <property type="entry name" value="THF_DHG_CYH"/>
    <property type="match status" value="1"/>
</dbReference>
<dbReference type="Pfam" id="PF02882">
    <property type="entry name" value="THF_DHG_CYH_C"/>
    <property type="match status" value="1"/>
</dbReference>
<dbReference type="PRINTS" id="PR00085">
    <property type="entry name" value="THFDHDRGNASE"/>
</dbReference>
<dbReference type="SUPFAM" id="SSF53223">
    <property type="entry name" value="Aminoacid dehydrogenase-like, N-terminal domain"/>
    <property type="match status" value="1"/>
</dbReference>
<dbReference type="SUPFAM" id="SSF51735">
    <property type="entry name" value="NAD(P)-binding Rossmann-fold domains"/>
    <property type="match status" value="1"/>
</dbReference>
<dbReference type="PROSITE" id="PS00766">
    <property type="entry name" value="THF_DHG_CYH_1"/>
    <property type="match status" value="1"/>
</dbReference>
<dbReference type="PROSITE" id="PS00767">
    <property type="entry name" value="THF_DHG_CYH_2"/>
    <property type="match status" value="1"/>
</dbReference>